<feature type="chain" id="PRO_0000406603" description="Indole-3-acetate O-methyltransferase 1">
    <location>
        <begin position="1"/>
        <end position="404"/>
    </location>
</feature>
<feature type="binding site" evidence="1">
    <location>
        <begin position="82"/>
        <end position="83"/>
    </location>
    <ligand>
        <name>S-adenosyl-L-methionine</name>
        <dbReference type="ChEBI" id="CHEBI:59789"/>
    </ligand>
</feature>
<feature type="binding site" evidence="1">
    <location>
        <position position="88"/>
    </location>
    <ligand>
        <name>S-adenosyl-L-methionine</name>
        <dbReference type="ChEBI" id="CHEBI:59789"/>
    </ligand>
</feature>
<feature type="binding site" evidence="1">
    <location>
        <position position="120"/>
    </location>
    <ligand>
        <name>S-adenosyl-L-methionine</name>
        <dbReference type="ChEBI" id="CHEBI:59789"/>
    </ligand>
</feature>
<feature type="binding site" evidence="1">
    <location>
        <begin position="169"/>
        <end position="171"/>
    </location>
    <ligand>
        <name>S-adenosyl-L-methionine</name>
        <dbReference type="ChEBI" id="CHEBI:59789"/>
    </ligand>
</feature>
<feature type="binding site" evidence="1">
    <location>
        <begin position="186"/>
        <end position="188"/>
    </location>
    <ligand>
        <name>S-adenosyl-L-methionine</name>
        <dbReference type="ChEBI" id="CHEBI:59789"/>
    </ligand>
</feature>
<feature type="binding site" evidence="1">
    <location>
        <position position="208"/>
    </location>
    <ligand>
        <name>Mg(2+)</name>
        <dbReference type="ChEBI" id="CHEBI:18420"/>
    </ligand>
</feature>
<feature type="binding site" evidence="1">
    <location>
        <position position="212"/>
    </location>
    <ligand>
        <name>Mg(2+)</name>
        <dbReference type="ChEBI" id="CHEBI:18420"/>
    </ligand>
</feature>
<feature type="binding site" evidence="1">
    <location>
        <position position="294"/>
    </location>
    <ligand>
        <name>Mg(2+)</name>
        <dbReference type="ChEBI" id="CHEBI:18420"/>
    </ligand>
</feature>
<feature type="binding site" evidence="1">
    <location>
        <position position="295"/>
    </location>
    <ligand>
        <name>Mg(2+)</name>
        <dbReference type="ChEBI" id="CHEBI:18420"/>
    </ligand>
</feature>
<feature type="binding site" evidence="1">
    <location>
        <position position="297"/>
    </location>
    <ligand>
        <name>Mg(2+)</name>
        <dbReference type="ChEBI" id="CHEBI:18420"/>
    </ligand>
</feature>
<feature type="binding site" evidence="1">
    <location>
        <position position="298"/>
    </location>
    <ligand>
        <name>Mg(2+)</name>
        <dbReference type="ChEBI" id="CHEBI:18420"/>
    </ligand>
</feature>
<gene>
    <name type="primary">IAMT1</name>
    <name type="synonym">SABATH4</name>
    <name type="ordered locus">Os04g0665200</name>
    <name type="ordered locus">LOC_Os04g56950</name>
    <name type="ORF">OSJNBa0087O24.5</name>
</gene>
<organism>
    <name type="scientific">Oryza sativa subsp. japonica</name>
    <name type="common">Rice</name>
    <dbReference type="NCBI Taxonomy" id="39947"/>
    <lineage>
        <taxon>Eukaryota</taxon>
        <taxon>Viridiplantae</taxon>
        <taxon>Streptophyta</taxon>
        <taxon>Embryophyta</taxon>
        <taxon>Tracheophyta</taxon>
        <taxon>Spermatophyta</taxon>
        <taxon>Magnoliopsida</taxon>
        <taxon>Liliopsida</taxon>
        <taxon>Poales</taxon>
        <taxon>Poaceae</taxon>
        <taxon>BOP clade</taxon>
        <taxon>Oryzoideae</taxon>
        <taxon>Oryzeae</taxon>
        <taxon>Oryzinae</taxon>
        <taxon>Oryza</taxon>
        <taxon>Oryza sativa</taxon>
    </lineage>
</organism>
<evidence type="ECO:0000250" key="1"/>
<evidence type="ECO:0000269" key="2">
    <source>
    </source>
</evidence>
<evidence type="ECO:0000305" key="3"/>
<dbReference type="EC" id="2.1.1.278"/>
<dbReference type="EMBL" id="EU375746">
    <property type="protein sequence ID" value="ABZ04474.1"/>
    <property type="molecule type" value="mRNA"/>
</dbReference>
<dbReference type="EMBL" id="AL606646">
    <property type="protein sequence ID" value="CAE03582.1"/>
    <property type="status" value="ALT_INIT"/>
    <property type="molecule type" value="Genomic_DNA"/>
</dbReference>
<dbReference type="EMBL" id="AP008210">
    <property type="protein sequence ID" value="BAF16089.1"/>
    <property type="molecule type" value="Genomic_DNA"/>
</dbReference>
<dbReference type="EMBL" id="AP014960">
    <property type="protein sequence ID" value="BAS91499.1"/>
    <property type="molecule type" value="Genomic_DNA"/>
</dbReference>
<dbReference type="EMBL" id="AK110936">
    <property type="protein sequence ID" value="BAG99087.1"/>
    <property type="molecule type" value="mRNA"/>
</dbReference>
<dbReference type="RefSeq" id="XP_015636829.1">
    <property type="nucleotide sequence ID" value="XM_015781343.1"/>
</dbReference>
<dbReference type="RefSeq" id="XP_015636831.1">
    <property type="nucleotide sequence ID" value="XM_015781345.1"/>
</dbReference>
<dbReference type="SMR" id="Q0J998"/>
<dbReference type="FunCoup" id="Q0J998">
    <property type="interactions" value="10"/>
</dbReference>
<dbReference type="PaxDb" id="39947-Q0J998"/>
<dbReference type="EnsemblPlants" id="Os04t0665200-01">
    <property type="protein sequence ID" value="Os04t0665200-01"/>
    <property type="gene ID" value="Os04g0665200"/>
</dbReference>
<dbReference type="Gramene" id="Os04t0665200-01">
    <property type="protein sequence ID" value="Os04t0665200-01"/>
    <property type="gene ID" value="Os04g0665200"/>
</dbReference>
<dbReference type="KEGG" id="dosa:Os04g0665200"/>
<dbReference type="eggNOG" id="ENOG502QQYU">
    <property type="taxonomic scope" value="Eukaryota"/>
</dbReference>
<dbReference type="HOGENOM" id="CLU_019628_1_1_1"/>
<dbReference type="InParanoid" id="Q0J998"/>
<dbReference type="OMA" id="RPYHAAG"/>
<dbReference type="OrthoDB" id="1523883at2759"/>
<dbReference type="BRENDA" id="2.1.1.278">
    <property type="organism ID" value="8948"/>
</dbReference>
<dbReference type="Proteomes" id="UP000000763">
    <property type="component" value="Chromosome 4"/>
</dbReference>
<dbReference type="Proteomes" id="UP000059680">
    <property type="component" value="Chromosome 4"/>
</dbReference>
<dbReference type="GO" id="GO:0051749">
    <property type="term" value="F:indole acetic acid carboxyl methyltransferase activity"/>
    <property type="evidence" value="ECO:0000314"/>
    <property type="project" value="UniProtKB"/>
</dbReference>
<dbReference type="GO" id="GO:0103007">
    <property type="term" value="F:indole-3-acetate carboxyl methyltransferase activity"/>
    <property type="evidence" value="ECO:0007669"/>
    <property type="project" value="UniProtKB-EC"/>
</dbReference>
<dbReference type="GO" id="GO:0046872">
    <property type="term" value="F:metal ion binding"/>
    <property type="evidence" value="ECO:0007669"/>
    <property type="project" value="UniProtKB-KW"/>
</dbReference>
<dbReference type="GO" id="GO:0008757">
    <property type="term" value="F:S-adenosylmethionine-dependent methyltransferase activity"/>
    <property type="evidence" value="ECO:0000318"/>
    <property type="project" value="GO_Central"/>
</dbReference>
<dbReference type="GO" id="GO:0140964">
    <property type="term" value="P:intracellular auxin homeostasis"/>
    <property type="evidence" value="ECO:0000305"/>
    <property type="project" value="UniProtKB"/>
</dbReference>
<dbReference type="GO" id="GO:0032259">
    <property type="term" value="P:methylation"/>
    <property type="evidence" value="ECO:0000318"/>
    <property type="project" value="GO_Central"/>
</dbReference>
<dbReference type="Gene3D" id="1.10.1200.270">
    <property type="entry name" value="Methyltransferase, alpha-helical capping domain"/>
    <property type="match status" value="1"/>
</dbReference>
<dbReference type="Gene3D" id="3.40.50.150">
    <property type="entry name" value="Vaccinia Virus protein VP39"/>
    <property type="match status" value="1"/>
</dbReference>
<dbReference type="InterPro" id="IPR005299">
    <property type="entry name" value="MeTrfase_7"/>
</dbReference>
<dbReference type="InterPro" id="IPR042086">
    <property type="entry name" value="MeTrfase_capping"/>
</dbReference>
<dbReference type="InterPro" id="IPR029063">
    <property type="entry name" value="SAM-dependent_MTases_sf"/>
</dbReference>
<dbReference type="PANTHER" id="PTHR31009">
    <property type="entry name" value="S-ADENOSYL-L-METHIONINE:CARBOXYL METHYLTRANSFERASE FAMILY PROTEIN"/>
    <property type="match status" value="1"/>
</dbReference>
<dbReference type="Pfam" id="PF03492">
    <property type="entry name" value="Methyltransf_7"/>
    <property type="match status" value="1"/>
</dbReference>
<dbReference type="SUPFAM" id="SSF53335">
    <property type="entry name" value="S-adenosyl-L-methionine-dependent methyltransferases"/>
    <property type="match status" value="1"/>
</dbReference>
<name>IAMT1_ORYSJ</name>
<accession>Q0J998</accession>
<accession>A0A0P0WGA0</accession>
<accession>Q7XPK4</accession>
<keyword id="KW-0460">Magnesium</keyword>
<keyword id="KW-0479">Metal-binding</keyword>
<keyword id="KW-0489">Methyltransferase</keyword>
<keyword id="KW-1185">Reference proteome</keyword>
<keyword id="KW-0949">S-adenosyl-L-methionine</keyword>
<keyword id="KW-0808">Transferase</keyword>
<proteinExistence type="evidence at protein level"/>
<protein>
    <recommendedName>
        <fullName>Indole-3-acetate O-methyltransferase 1</fullName>
        <ecNumber>2.1.1.278</ecNumber>
    </recommendedName>
    <alternativeName>
        <fullName>IAA carboxylmethyltransferase 1</fullName>
    </alternativeName>
    <alternativeName>
        <fullName>OsSABATH4</fullName>
    </alternativeName>
    <alternativeName>
        <fullName>S-adenosyl-L-methionine:(indol-3-yl) acetate carboxylmethyltransferase 1</fullName>
    </alternativeName>
</protein>
<comment type="function">
    <text evidence="2">Catalyzes the methylation of the free carboxyl end of the plant hormone indole-3-acetic acid (IAA). Converts IAA to IAA methyl ester (MeIAA). Regulates IAA activities by IAA methylation. Methylation of IAA plays an important role in regulating plant development and auxin homeostasis. MeIAA seems to be an inactive form of IAA.</text>
</comment>
<comment type="catalytic activity">
    <reaction evidence="2">
        <text>(indol-3-yl)acetate + S-adenosyl-L-methionine = methyl (indol-3-yl)acetate + S-adenosyl-L-homocysteine</text>
        <dbReference type="Rhea" id="RHEA:36131"/>
        <dbReference type="ChEBI" id="CHEBI:30854"/>
        <dbReference type="ChEBI" id="CHEBI:57856"/>
        <dbReference type="ChEBI" id="CHEBI:59789"/>
        <dbReference type="ChEBI" id="CHEBI:72782"/>
        <dbReference type="EC" id="2.1.1.278"/>
    </reaction>
</comment>
<comment type="cofactor">
    <cofactor evidence="1">
        <name>Mg(2+)</name>
        <dbReference type="ChEBI" id="CHEBI:18420"/>
    </cofactor>
    <text evidence="1">Binds 1 Mg(2+) ion per subunit.</text>
</comment>
<comment type="biophysicochemical properties">
    <phDependence>
        <text evidence="2">Optimum pH is 7.5.</text>
    </phDependence>
</comment>
<comment type="subunit">
    <text evidence="1">Homodimer.</text>
</comment>
<comment type="tissue specificity">
    <text evidence="2">Expressed in roots and panicles.</text>
</comment>
<comment type="similarity">
    <text evidence="3">Belongs to the methyltransferase superfamily. SABATH family.</text>
</comment>
<comment type="sequence caution" evidence="3">
    <conflict type="erroneous initiation">
        <sequence resource="EMBL-CDS" id="CAE03582"/>
    </conflict>
    <text>Truncated N-terminus.</text>
</comment>
<reference key="1">
    <citation type="journal article" date="2008" name="Plant Physiol.">
        <title>Structural, biochemical, and phylogenetic analyses suggest that indole-3-acetic acid methyltransferase is an evolutionarily ancient member of the SABATH family.</title>
        <authorList>
            <person name="Zhao N."/>
            <person name="Ferrer J.L."/>
            <person name="Ross J."/>
            <person name="Guan J."/>
            <person name="Yang Y."/>
            <person name="Pichersky E."/>
            <person name="Noel J.P."/>
            <person name="Chen F."/>
        </authorList>
    </citation>
    <scope>NUCLEOTIDE SEQUENCE [MRNA]</scope>
    <scope>FUNCTION</scope>
    <scope>CATALYTIC ACTIVITY</scope>
    <scope>BIOPHYSICOCHEMICAL PROPERTIES</scope>
    <scope>TISSUE SPECIFICITY</scope>
    <source>
        <strain>cv. Nipponbare</strain>
    </source>
</reference>
<reference key="2">
    <citation type="journal article" date="2002" name="Nature">
        <title>Sequence and analysis of rice chromosome 4.</title>
        <authorList>
            <person name="Feng Q."/>
            <person name="Zhang Y."/>
            <person name="Hao P."/>
            <person name="Wang S."/>
            <person name="Fu G."/>
            <person name="Huang Y."/>
            <person name="Li Y."/>
            <person name="Zhu J."/>
            <person name="Liu Y."/>
            <person name="Hu X."/>
            <person name="Jia P."/>
            <person name="Zhang Y."/>
            <person name="Zhao Q."/>
            <person name="Ying K."/>
            <person name="Yu S."/>
            <person name="Tang Y."/>
            <person name="Weng Q."/>
            <person name="Zhang L."/>
            <person name="Lu Y."/>
            <person name="Mu J."/>
            <person name="Lu Y."/>
            <person name="Zhang L.S."/>
            <person name="Yu Z."/>
            <person name="Fan D."/>
            <person name="Liu X."/>
            <person name="Lu T."/>
            <person name="Li C."/>
            <person name="Wu Y."/>
            <person name="Sun T."/>
            <person name="Lei H."/>
            <person name="Li T."/>
            <person name="Hu H."/>
            <person name="Guan J."/>
            <person name="Wu M."/>
            <person name="Zhang R."/>
            <person name="Zhou B."/>
            <person name="Chen Z."/>
            <person name="Chen L."/>
            <person name="Jin Z."/>
            <person name="Wang R."/>
            <person name="Yin H."/>
            <person name="Cai Z."/>
            <person name="Ren S."/>
            <person name="Lv G."/>
            <person name="Gu W."/>
            <person name="Zhu G."/>
            <person name="Tu Y."/>
            <person name="Jia J."/>
            <person name="Zhang Y."/>
            <person name="Chen J."/>
            <person name="Kang H."/>
            <person name="Chen X."/>
            <person name="Shao C."/>
            <person name="Sun Y."/>
            <person name="Hu Q."/>
            <person name="Zhang X."/>
            <person name="Zhang W."/>
            <person name="Wang L."/>
            <person name="Ding C."/>
            <person name="Sheng H."/>
            <person name="Gu J."/>
            <person name="Chen S."/>
            <person name="Ni L."/>
            <person name="Zhu F."/>
            <person name="Chen W."/>
            <person name="Lan L."/>
            <person name="Lai Y."/>
            <person name="Cheng Z."/>
            <person name="Gu M."/>
            <person name="Jiang J."/>
            <person name="Li J."/>
            <person name="Hong G."/>
            <person name="Xue Y."/>
            <person name="Han B."/>
        </authorList>
    </citation>
    <scope>NUCLEOTIDE SEQUENCE [LARGE SCALE GENOMIC DNA]</scope>
    <source>
        <strain>cv. Nipponbare</strain>
    </source>
</reference>
<reference key="3">
    <citation type="journal article" date="2005" name="Nature">
        <title>The map-based sequence of the rice genome.</title>
        <authorList>
            <consortium name="International rice genome sequencing project (IRGSP)"/>
        </authorList>
    </citation>
    <scope>NUCLEOTIDE SEQUENCE [LARGE SCALE GENOMIC DNA]</scope>
    <source>
        <strain>cv. Nipponbare</strain>
    </source>
</reference>
<reference key="4">
    <citation type="journal article" date="2008" name="Nucleic Acids Res.">
        <title>The rice annotation project database (RAP-DB): 2008 update.</title>
        <authorList>
            <consortium name="The rice annotation project (RAP)"/>
        </authorList>
    </citation>
    <scope>GENOME REANNOTATION</scope>
    <source>
        <strain>cv. Nipponbare</strain>
    </source>
</reference>
<reference key="5">
    <citation type="journal article" date="2013" name="Rice">
        <title>Improvement of the Oryza sativa Nipponbare reference genome using next generation sequence and optical map data.</title>
        <authorList>
            <person name="Kawahara Y."/>
            <person name="de la Bastide M."/>
            <person name="Hamilton J.P."/>
            <person name="Kanamori H."/>
            <person name="McCombie W.R."/>
            <person name="Ouyang S."/>
            <person name="Schwartz D.C."/>
            <person name="Tanaka T."/>
            <person name="Wu J."/>
            <person name="Zhou S."/>
            <person name="Childs K.L."/>
            <person name="Davidson R.M."/>
            <person name="Lin H."/>
            <person name="Quesada-Ocampo L."/>
            <person name="Vaillancourt B."/>
            <person name="Sakai H."/>
            <person name="Lee S.S."/>
            <person name="Kim J."/>
            <person name="Numa H."/>
            <person name="Itoh T."/>
            <person name="Buell C.R."/>
            <person name="Matsumoto T."/>
        </authorList>
    </citation>
    <scope>GENOME REANNOTATION</scope>
    <source>
        <strain>cv. Nipponbare</strain>
    </source>
</reference>
<reference key="6">
    <citation type="journal article" date="2003" name="Science">
        <title>Collection, mapping, and annotation of over 28,000 cDNA clones from japonica rice.</title>
        <authorList>
            <consortium name="The rice full-length cDNA consortium"/>
        </authorList>
    </citation>
    <scope>NUCLEOTIDE SEQUENCE [LARGE SCALE MRNA]</scope>
    <source>
        <strain>cv. Nipponbare</strain>
    </source>
</reference>
<sequence>MTMAMASMKGENVTVSAAAAPRMKKLASMLCMKGGNGDGSYLNNSQAQALHARRMLHFLEETLDAMMERSSSDKLFTAADLGCSCGSNSLFIVDVIVRRVSEAYESRGRDAPEFQVFFSDLPSNDFNTLFQLLPPLLAPVAGSLEECLAAGEGAATATRPYHAAGVPGTFYGRLFPGESIDVFTSTFSLHWLSQVPEEVGDSASPAYNGGRVFVHRATEAVAAAYKRQFQADLARFLRSRAREMKRGGAMFLACLGRSSGDPADQGGAGLLFGTHFQDAWDDLVQEGVVEGEKRDSFNIPVYAPSLQEFRDVVRADGAFAIDRLELVRGGSPLVVDRPDDAAEVGRAMANSCKAVAGVLVDAHIGERRGAQLFERLERRAARHARELVEKMHFFHVVCSLSLAP</sequence>